<accession>Q0P140</accession>
<name>YA037_HUMAN</name>
<reference key="1">
    <citation type="submission" date="2005-07" db="EMBL/GenBank/DDBJ databases">
        <title>A new spermatogenesis-related gene.</title>
        <authorList>
            <person name="Chen Y.C."/>
            <person name="Chen X."/>
            <person name="Miao S.Y."/>
            <person name="Wang L.F."/>
        </authorList>
    </citation>
    <scope>NUCLEOTIDE SEQUENCE [LARGE SCALE MRNA]</scope>
    <source>
        <tissue>Testis</tissue>
    </source>
</reference>
<feature type="chain" id="PRO_0000342680" description="Putative uncharacterized protein HSD52">
    <location>
        <begin position="1"/>
        <end position="79"/>
    </location>
</feature>
<sequence length="79" mass="8416">MQDVHTKSIACDGDLLPVLQENSISFQMLSLEMSGSFHSSPALENATITILHVSLLSFFRGIQAPCRGSPLLVTDSPGG</sequence>
<evidence type="ECO:0000305" key="1"/>
<keyword id="KW-1185">Reference proteome</keyword>
<proteinExistence type="uncertain"/>
<comment type="caution">
    <text evidence="1">Product of a dubious CDS prediction.</text>
</comment>
<organism>
    <name type="scientific">Homo sapiens</name>
    <name type="common">Human</name>
    <dbReference type="NCBI Taxonomy" id="9606"/>
    <lineage>
        <taxon>Eukaryota</taxon>
        <taxon>Metazoa</taxon>
        <taxon>Chordata</taxon>
        <taxon>Craniata</taxon>
        <taxon>Vertebrata</taxon>
        <taxon>Euteleostomi</taxon>
        <taxon>Mammalia</taxon>
        <taxon>Eutheria</taxon>
        <taxon>Euarchontoglires</taxon>
        <taxon>Primates</taxon>
        <taxon>Haplorrhini</taxon>
        <taxon>Catarrhini</taxon>
        <taxon>Hominidae</taxon>
        <taxon>Homo</taxon>
    </lineage>
</organism>
<gene>
    <name type="ORF">HSD52</name>
</gene>
<protein>
    <recommendedName>
        <fullName>Putative uncharacterized protein HSD52</fullName>
    </recommendedName>
</protein>
<dbReference type="EMBL" id="DQ141102">
    <property type="protein sequence ID" value="AAZ73727.1"/>
    <property type="molecule type" value="mRNA"/>
</dbReference>
<dbReference type="BioMuta" id="HSD52"/>
<dbReference type="neXtProt" id="NX_Q0P140"/>
<dbReference type="InParanoid" id="Q0P140"/>
<dbReference type="PAN-GO" id="Q0P140">
    <property type="GO annotations" value="0 GO annotations based on evolutionary models"/>
</dbReference>
<dbReference type="ChiTaRS" id="HSD52">
    <property type="organism name" value="human"/>
</dbReference>
<dbReference type="Pharos" id="Q0P140">
    <property type="development level" value="Tdark"/>
</dbReference>
<dbReference type="Proteomes" id="UP000005640">
    <property type="component" value="Unplaced"/>
</dbReference>
<dbReference type="RNAct" id="Q0P140">
    <property type="molecule type" value="protein"/>
</dbReference>